<feature type="chain" id="PRO_0000439516" description="Transcription factor MYBC1">
    <location>
        <begin position="1"/>
        <end position="248"/>
    </location>
</feature>
<feature type="DNA-binding region" description="Myb-like GARP" evidence="1">
    <location>
        <begin position="102"/>
        <end position="161"/>
    </location>
</feature>
<proteinExistence type="evidence at protein level"/>
<gene>
    <name evidence="4" type="primary">MYBC1</name>
    <name evidence="5" type="synonym">MTF1</name>
    <name evidence="7" type="ordered locus">At2g40970</name>
</gene>
<protein>
    <recommendedName>
        <fullName evidence="6">Transcription factor MYBC1</fullName>
    </recommendedName>
</protein>
<name>MYBC1_ARATH</name>
<dbReference type="EMBL" id="AC002409">
    <property type="protein sequence ID" value="AAB86457.1"/>
    <property type="molecule type" value="Genomic_DNA"/>
</dbReference>
<dbReference type="EMBL" id="AC004261">
    <property type="protein sequence ID" value="AAM14927.1"/>
    <property type="molecule type" value="Genomic_DNA"/>
</dbReference>
<dbReference type="EMBL" id="CP002685">
    <property type="protein sequence ID" value="AEC09908.1"/>
    <property type="molecule type" value="Genomic_DNA"/>
</dbReference>
<dbReference type="EMBL" id="AY072381">
    <property type="protein sequence ID" value="AAL62373.1"/>
    <property type="molecule type" value="mRNA"/>
</dbReference>
<dbReference type="EMBL" id="BT000098">
    <property type="protein sequence ID" value="AAN15417.1"/>
    <property type="molecule type" value="mRNA"/>
</dbReference>
<dbReference type="PIR" id="T00761">
    <property type="entry name" value="T02122"/>
</dbReference>
<dbReference type="RefSeq" id="NP_181630.1">
    <property type="nucleotide sequence ID" value="NM_129662.4"/>
</dbReference>
<dbReference type="SMR" id="O22210"/>
<dbReference type="FunCoup" id="O22210">
    <property type="interactions" value="2"/>
</dbReference>
<dbReference type="IntAct" id="O22210">
    <property type="interactions" value="2"/>
</dbReference>
<dbReference type="STRING" id="3702.O22210"/>
<dbReference type="GlyGen" id="O22210">
    <property type="glycosylation" value="2 sites"/>
</dbReference>
<dbReference type="PaxDb" id="3702-AT2G40970.1"/>
<dbReference type="ProteomicsDB" id="251391"/>
<dbReference type="EnsemblPlants" id="AT2G40970.1">
    <property type="protein sequence ID" value="AT2G40970.1"/>
    <property type="gene ID" value="AT2G40970"/>
</dbReference>
<dbReference type="GeneID" id="818697"/>
<dbReference type="Gramene" id="AT2G40970.1">
    <property type="protein sequence ID" value="AT2G40970.1"/>
    <property type="gene ID" value="AT2G40970"/>
</dbReference>
<dbReference type="KEGG" id="ath:AT2G40970"/>
<dbReference type="Araport" id="AT2G40970"/>
<dbReference type="TAIR" id="AT2G40970">
    <property type="gene designation" value="MYBC1"/>
</dbReference>
<dbReference type="eggNOG" id="ENOG502RIEW">
    <property type="taxonomic scope" value="Eukaryota"/>
</dbReference>
<dbReference type="HOGENOM" id="CLU_055357_2_0_1"/>
<dbReference type="InParanoid" id="O22210"/>
<dbReference type="OMA" id="MMNSDFG"/>
<dbReference type="OrthoDB" id="60033at2759"/>
<dbReference type="PhylomeDB" id="O22210"/>
<dbReference type="PRO" id="PR:O22210"/>
<dbReference type="Proteomes" id="UP000006548">
    <property type="component" value="Chromosome 2"/>
</dbReference>
<dbReference type="ExpressionAtlas" id="O22210">
    <property type="expression patterns" value="baseline and differential"/>
</dbReference>
<dbReference type="GO" id="GO:0005634">
    <property type="term" value="C:nucleus"/>
    <property type="evidence" value="ECO:0000314"/>
    <property type="project" value="TAIR"/>
</dbReference>
<dbReference type="GO" id="GO:0003677">
    <property type="term" value="F:DNA binding"/>
    <property type="evidence" value="ECO:0007669"/>
    <property type="project" value="UniProtKB-KW"/>
</dbReference>
<dbReference type="GO" id="GO:0003700">
    <property type="term" value="F:DNA-binding transcription factor activity"/>
    <property type="evidence" value="ECO:0000250"/>
    <property type="project" value="TAIR"/>
</dbReference>
<dbReference type="GO" id="GO:0006355">
    <property type="term" value="P:regulation of DNA-templated transcription"/>
    <property type="evidence" value="ECO:0000304"/>
    <property type="project" value="TAIR"/>
</dbReference>
<dbReference type="GO" id="GO:0009409">
    <property type="term" value="P:response to cold"/>
    <property type="evidence" value="ECO:0000315"/>
    <property type="project" value="TAIR"/>
</dbReference>
<dbReference type="FunFam" id="1.10.10.60:FF:000007">
    <property type="entry name" value="Two-component response regulator"/>
    <property type="match status" value="1"/>
</dbReference>
<dbReference type="Gene3D" id="1.10.10.60">
    <property type="entry name" value="Homeodomain-like"/>
    <property type="match status" value="1"/>
</dbReference>
<dbReference type="InterPro" id="IPR009057">
    <property type="entry name" value="Homeodomain-like_sf"/>
</dbReference>
<dbReference type="InterPro" id="IPR044841">
    <property type="entry name" value="LUX/BOA-like"/>
</dbReference>
<dbReference type="InterPro" id="IPR017930">
    <property type="entry name" value="Myb_dom"/>
</dbReference>
<dbReference type="InterPro" id="IPR006447">
    <property type="entry name" value="Myb_dom_plants"/>
</dbReference>
<dbReference type="InterPro" id="IPR001005">
    <property type="entry name" value="SANT/Myb"/>
</dbReference>
<dbReference type="NCBIfam" id="TIGR01557">
    <property type="entry name" value="myb_SHAQKYF"/>
    <property type="match status" value="1"/>
</dbReference>
<dbReference type="PANTHER" id="PTHR31442">
    <property type="entry name" value="HOMEODOMAIN-LIKE SUPERFAMILY PROTEIN-RELATED"/>
    <property type="match status" value="1"/>
</dbReference>
<dbReference type="PANTHER" id="PTHR31442:SF30">
    <property type="entry name" value="TRANSCRIPTION FACTOR MYBC1"/>
    <property type="match status" value="1"/>
</dbReference>
<dbReference type="Pfam" id="PF00249">
    <property type="entry name" value="Myb_DNA-binding"/>
    <property type="match status" value="1"/>
</dbReference>
<dbReference type="SUPFAM" id="SSF46689">
    <property type="entry name" value="Homeodomain-like"/>
    <property type="match status" value="1"/>
</dbReference>
<dbReference type="PROSITE" id="PS51294">
    <property type="entry name" value="HTH_MYB"/>
    <property type="match status" value="1"/>
</dbReference>
<accession>O22210</accession>
<keyword id="KW-0238">DNA-binding</keyword>
<keyword id="KW-0539">Nucleus</keyword>
<keyword id="KW-1185">Reference proteome</keyword>
<keyword id="KW-0346">Stress response</keyword>
<keyword id="KW-0804">Transcription</keyword>
<keyword id="KW-0805">Transcription regulation</keyword>
<organism>
    <name type="scientific">Arabidopsis thaliana</name>
    <name type="common">Mouse-ear cress</name>
    <dbReference type="NCBI Taxonomy" id="3702"/>
    <lineage>
        <taxon>Eukaryota</taxon>
        <taxon>Viridiplantae</taxon>
        <taxon>Streptophyta</taxon>
        <taxon>Embryophyta</taxon>
        <taxon>Tracheophyta</taxon>
        <taxon>Spermatophyta</taxon>
        <taxon>Magnoliopsida</taxon>
        <taxon>eudicotyledons</taxon>
        <taxon>Gunneridae</taxon>
        <taxon>Pentapetalae</taxon>
        <taxon>rosids</taxon>
        <taxon>malvids</taxon>
        <taxon>Brassicales</taxon>
        <taxon>Brassicaceae</taxon>
        <taxon>Camelineae</taxon>
        <taxon>Arabidopsis</taxon>
    </lineage>
</organism>
<comment type="function">
    <text evidence="2">Probable transcription factor that acts as a negative regulator of freezing tolerance via a CBF-independent pathway.</text>
</comment>
<comment type="subcellular location">
    <subcellularLocation>
        <location evidence="1 2">Nucleus</location>
    </subcellularLocation>
</comment>
<comment type="tissue specificity">
    <text evidence="2">Expressed in roots, leaves, stems, petioles, filaments, stigma, pedicels, sepals, anthers, petals, and siliques.</text>
</comment>
<comment type="induction">
    <text evidence="2">Induced by drought, salt and abscisic acid (ABA). Down-regulated by cold.</text>
</comment>
<comment type="disruption phenotype">
    <text evidence="2">No visible phenotype under normal growth conditions, but mutant plants show increased tolerance to freezing.</text>
</comment>
<comment type="biotechnology">
    <text evidence="3">Repression of MYBC1/MTF1 promotes Arabidopsis plant transformation by Agrobacterium tumefaciens.</text>
</comment>
<evidence type="ECO:0000255" key="1">
    <source>
        <dbReference type="PROSITE-ProRule" id="PRU00625"/>
    </source>
</evidence>
<evidence type="ECO:0000269" key="2">
    <source>
    </source>
</evidence>
<evidence type="ECO:0000269" key="3">
    <source>
    </source>
</evidence>
<evidence type="ECO:0000303" key="4">
    <source>
    </source>
</evidence>
<evidence type="ECO:0000303" key="5">
    <source>
    </source>
</evidence>
<evidence type="ECO:0000305" key="6"/>
<evidence type="ECO:0000312" key="7">
    <source>
        <dbReference type="Araport" id="AT2G40970"/>
    </source>
</evidence>
<sequence>MREDNPNWFLRWEEELPSPEELIPISQTLITPHLALAFQIGSPNHHLGSKRTTAIYHQKLQSSTTPTTPTPTPPPMMMNSDFGGGDSTDLGSGSIGGEPARTLKRPRLVWTPQLHKRFVDAVGHLGIKNAVPKTIMQLMSVEGLTRENVASHLQKYRLYLRRMQGGNGNGITGGHVIVSDSATDRLFASSPVPAHFLSPDYLMPPLEHSYMGKHVITQQNQVVRNLRYEDSEYGHGSMKMLKLFPAGN</sequence>
<reference key="1">
    <citation type="journal article" date="1999" name="Nature">
        <title>Sequence and analysis of chromosome 2 of the plant Arabidopsis thaliana.</title>
        <authorList>
            <person name="Lin X."/>
            <person name="Kaul S."/>
            <person name="Rounsley S.D."/>
            <person name="Shea T.P."/>
            <person name="Benito M.-I."/>
            <person name="Town C.D."/>
            <person name="Fujii C.Y."/>
            <person name="Mason T.M."/>
            <person name="Bowman C.L."/>
            <person name="Barnstead M.E."/>
            <person name="Feldblyum T.V."/>
            <person name="Buell C.R."/>
            <person name="Ketchum K.A."/>
            <person name="Lee J.J."/>
            <person name="Ronning C.M."/>
            <person name="Koo H.L."/>
            <person name="Moffat K.S."/>
            <person name="Cronin L.A."/>
            <person name="Shen M."/>
            <person name="Pai G."/>
            <person name="Van Aken S."/>
            <person name="Umayam L."/>
            <person name="Tallon L.J."/>
            <person name="Gill J.E."/>
            <person name="Adams M.D."/>
            <person name="Carrera A.J."/>
            <person name="Creasy T.H."/>
            <person name="Goodman H.M."/>
            <person name="Somerville C.R."/>
            <person name="Copenhaver G.P."/>
            <person name="Preuss D."/>
            <person name="Nierman W.C."/>
            <person name="White O."/>
            <person name="Eisen J.A."/>
            <person name="Salzberg S.L."/>
            <person name="Fraser C.M."/>
            <person name="Venter J.C."/>
        </authorList>
    </citation>
    <scope>NUCLEOTIDE SEQUENCE [LARGE SCALE GENOMIC DNA]</scope>
    <source>
        <strain>cv. Columbia</strain>
    </source>
</reference>
<reference key="2">
    <citation type="journal article" date="2017" name="Plant J.">
        <title>Araport11: a complete reannotation of the Arabidopsis thaliana reference genome.</title>
        <authorList>
            <person name="Cheng C.Y."/>
            <person name="Krishnakumar V."/>
            <person name="Chan A.P."/>
            <person name="Thibaud-Nissen F."/>
            <person name="Schobel S."/>
            <person name="Town C.D."/>
        </authorList>
    </citation>
    <scope>GENOME REANNOTATION</scope>
    <source>
        <strain>cv. Columbia</strain>
    </source>
</reference>
<reference key="3">
    <citation type="journal article" date="2003" name="Science">
        <title>Empirical analysis of transcriptional activity in the Arabidopsis genome.</title>
        <authorList>
            <person name="Yamada K."/>
            <person name="Lim J."/>
            <person name="Dale J.M."/>
            <person name="Chen H."/>
            <person name="Shinn P."/>
            <person name="Palm C.J."/>
            <person name="Southwick A.M."/>
            <person name="Wu H.C."/>
            <person name="Kim C.J."/>
            <person name="Nguyen M."/>
            <person name="Pham P.K."/>
            <person name="Cheuk R.F."/>
            <person name="Karlin-Newmann G."/>
            <person name="Liu S.X."/>
            <person name="Lam B."/>
            <person name="Sakano H."/>
            <person name="Wu T."/>
            <person name="Yu G."/>
            <person name="Miranda M."/>
            <person name="Quach H.L."/>
            <person name="Tripp M."/>
            <person name="Chang C.H."/>
            <person name="Lee J.M."/>
            <person name="Toriumi M.J."/>
            <person name="Chan M.M."/>
            <person name="Tang C.C."/>
            <person name="Onodera C.S."/>
            <person name="Deng J.M."/>
            <person name="Akiyama K."/>
            <person name="Ansari Y."/>
            <person name="Arakawa T."/>
            <person name="Banh J."/>
            <person name="Banno F."/>
            <person name="Bowser L."/>
            <person name="Brooks S.Y."/>
            <person name="Carninci P."/>
            <person name="Chao Q."/>
            <person name="Choy N."/>
            <person name="Enju A."/>
            <person name="Goldsmith A.D."/>
            <person name="Gurjal M."/>
            <person name="Hansen N.F."/>
            <person name="Hayashizaki Y."/>
            <person name="Johnson-Hopson C."/>
            <person name="Hsuan V.W."/>
            <person name="Iida K."/>
            <person name="Karnes M."/>
            <person name="Khan S."/>
            <person name="Koesema E."/>
            <person name="Ishida J."/>
            <person name="Jiang P.X."/>
            <person name="Jones T."/>
            <person name="Kawai J."/>
            <person name="Kamiya A."/>
            <person name="Meyers C."/>
            <person name="Nakajima M."/>
            <person name="Narusaka M."/>
            <person name="Seki M."/>
            <person name="Sakurai T."/>
            <person name="Satou M."/>
            <person name="Tamse R."/>
            <person name="Vaysberg M."/>
            <person name="Wallender E.K."/>
            <person name="Wong C."/>
            <person name="Yamamura Y."/>
            <person name="Yuan S."/>
            <person name="Shinozaki K."/>
            <person name="Davis R.W."/>
            <person name="Theologis A."/>
            <person name="Ecker J.R."/>
        </authorList>
    </citation>
    <scope>NUCLEOTIDE SEQUENCE [LARGE SCALE MRNA]</scope>
    <source>
        <strain>cv. Columbia</strain>
    </source>
</reference>
<reference key="4">
    <citation type="journal article" date="2010" name="Biochem. Biophys. Res. Commun.">
        <title>A single-repeat R3-MYB transcription factor MYBC1 negatively regulates freezing tolerance in Arabidopsis.</title>
        <authorList>
            <person name="Zhai H."/>
            <person name="Bai X."/>
            <person name="Zhu Y."/>
            <person name="Li Y."/>
            <person name="Cai H."/>
            <person name="Ji W."/>
            <person name="Ji Z."/>
            <person name="Liu X."/>
            <person name="Liu X."/>
            <person name="Li J."/>
        </authorList>
    </citation>
    <scope>FUNCTION</scope>
    <scope>SUBCELLULAR LOCATION</scope>
    <scope>TISSUE SPECIFICITY</scope>
    <scope>INDUCTION</scope>
    <scope>DISRUPTION PHENOTYPE</scope>
</reference>
<reference key="5">
    <citation type="journal article" date="2013" name="Sci. Signal.">
        <title>Cytokinins secreted by Agrobacterium promote transformation by repressing a plant myb transcription factor.</title>
        <authorList>
            <person name="Sardesai N."/>
            <person name="Lee L.Y."/>
            <person name="Chen H."/>
            <person name="Yi H."/>
            <person name="Olbricht G.R."/>
            <person name="Stirnberg A."/>
            <person name="Jeffries J."/>
            <person name="Xiong K."/>
            <person name="Doerge R.W."/>
            <person name="Gelvin S.B."/>
        </authorList>
    </citation>
    <scope>BIOTECHNOLOGY</scope>
</reference>